<accession>Q55BN0</accession>
<protein>
    <recommendedName>
        <fullName>Putative mediator of RNA polymerase II transcription subunit 23</fullName>
    </recommendedName>
    <alternativeName>
        <fullName>Putative mediator complex subunit 23</fullName>
    </alternativeName>
</protein>
<proteinExistence type="inferred from homology"/>
<gene>
    <name type="primary">med23</name>
    <name type="ORF">DDB_G0270434</name>
</gene>
<keyword id="KW-0010">Activator</keyword>
<keyword id="KW-0175">Coiled coil</keyword>
<keyword id="KW-0539">Nucleus</keyword>
<keyword id="KW-1185">Reference proteome</keyword>
<keyword id="KW-0804">Transcription</keyword>
<keyword id="KW-0805">Transcription regulation</keyword>
<comment type="function">
    <text evidence="1">Component of the Mediator complex, a coactivator involved in the regulated transcription of nearly all RNA polymerase II-dependent genes. Mediator functions as a bridge to convey information from gene-specific regulatory proteins to the basal RNA polymerase II transcription machinery. Mediator is recruited to promoters by direct interactions with regulatory proteins and serves as a scaffold for the assembly of a functional preinitiation complex with RNA polymerase II and the general transcription factors (By similarity).</text>
</comment>
<comment type="subunit">
    <text evidence="1">Component of the Mediator complex.</text>
</comment>
<comment type="subcellular location">
    <subcellularLocation>
        <location evidence="4">Nucleus</location>
    </subcellularLocation>
</comment>
<comment type="similarity">
    <text evidence="4">Belongs to the Mediator complex subunit 23 family.</text>
</comment>
<organism>
    <name type="scientific">Dictyostelium discoideum</name>
    <name type="common">Social amoeba</name>
    <dbReference type="NCBI Taxonomy" id="44689"/>
    <lineage>
        <taxon>Eukaryota</taxon>
        <taxon>Amoebozoa</taxon>
        <taxon>Evosea</taxon>
        <taxon>Eumycetozoa</taxon>
        <taxon>Dictyostelia</taxon>
        <taxon>Dictyosteliales</taxon>
        <taxon>Dictyosteliaceae</taxon>
        <taxon>Dictyostelium</taxon>
    </lineage>
</organism>
<evidence type="ECO:0000250" key="1"/>
<evidence type="ECO:0000255" key="2"/>
<evidence type="ECO:0000256" key="3">
    <source>
        <dbReference type="SAM" id="MobiDB-lite"/>
    </source>
</evidence>
<evidence type="ECO:0000305" key="4"/>
<name>MED23_DICDI</name>
<reference key="1">
    <citation type="journal article" date="2005" name="Nature">
        <title>The genome of the social amoeba Dictyostelium discoideum.</title>
        <authorList>
            <person name="Eichinger L."/>
            <person name="Pachebat J.A."/>
            <person name="Gloeckner G."/>
            <person name="Rajandream M.A."/>
            <person name="Sucgang R."/>
            <person name="Berriman M."/>
            <person name="Song J."/>
            <person name="Olsen R."/>
            <person name="Szafranski K."/>
            <person name="Xu Q."/>
            <person name="Tunggal B."/>
            <person name="Kummerfeld S."/>
            <person name="Madera M."/>
            <person name="Konfortov B.A."/>
            <person name="Rivero F."/>
            <person name="Bankier A.T."/>
            <person name="Lehmann R."/>
            <person name="Hamlin N."/>
            <person name="Davies R."/>
            <person name="Gaudet P."/>
            <person name="Fey P."/>
            <person name="Pilcher K."/>
            <person name="Chen G."/>
            <person name="Saunders D."/>
            <person name="Sodergren E.J."/>
            <person name="Davis P."/>
            <person name="Kerhornou A."/>
            <person name="Nie X."/>
            <person name="Hall N."/>
            <person name="Anjard C."/>
            <person name="Hemphill L."/>
            <person name="Bason N."/>
            <person name="Farbrother P."/>
            <person name="Desany B."/>
            <person name="Just E."/>
            <person name="Morio T."/>
            <person name="Rost R."/>
            <person name="Churcher C.M."/>
            <person name="Cooper J."/>
            <person name="Haydock S."/>
            <person name="van Driessche N."/>
            <person name="Cronin A."/>
            <person name="Goodhead I."/>
            <person name="Muzny D.M."/>
            <person name="Mourier T."/>
            <person name="Pain A."/>
            <person name="Lu M."/>
            <person name="Harper D."/>
            <person name="Lindsay R."/>
            <person name="Hauser H."/>
            <person name="James K.D."/>
            <person name="Quiles M."/>
            <person name="Madan Babu M."/>
            <person name="Saito T."/>
            <person name="Buchrieser C."/>
            <person name="Wardroper A."/>
            <person name="Felder M."/>
            <person name="Thangavelu M."/>
            <person name="Johnson D."/>
            <person name="Knights A."/>
            <person name="Loulseged H."/>
            <person name="Mungall K.L."/>
            <person name="Oliver K."/>
            <person name="Price C."/>
            <person name="Quail M.A."/>
            <person name="Urushihara H."/>
            <person name="Hernandez J."/>
            <person name="Rabbinowitsch E."/>
            <person name="Steffen D."/>
            <person name="Sanders M."/>
            <person name="Ma J."/>
            <person name="Kohara Y."/>
            <person name="Sharp S."/>
            <person name="Simmonds M.N."/>
            <person name="Spiegler S."/>
            <person name="Tivey A."/>
            <person name="Sugano S."/>
            <person name="White B."/>
            <person name="Walker D."/>
            <person name="Woodward J.R."/>
            <person name="Winckler T."/>
            <person name="Tanaka Y."/>
            <person name="Shaulsky G."/>
            <person name="Schleicher M."/>
            <person name="Weinstock G.M."/>
            <person name="Rosenthal A."/>
            <person name="Cox E.C."/>
            <person name="Chisholm R.L."/>
            <person name="Gibbs R.A."/>
            <person name="Loomis W.F."/>
            <person name="Platzer M."/>
            <person name="Kay R.R."/>
            <person name="Williams J.G."/>
            <person name="Dear P.H."/>
            <person name="Noegel A.A."/>
            <person name="Barrell B.G."/>
            <person name="Kuspa A."/>
        </authorList>
    </citation>
    <scope>NUCLEOTIDE SEQUENCE [LARGE SCALE GENOMIC DNA]</scope>
    <source>
        <strain>AX4</strain>
    </source>
</reference>
<reference key="2">
    <citation type="journal article" date="2008" name="Nucleic Acids Res.">
        <title>Comparative genomics supports a deep evolutionary origin for the large, four-module transcriptional mediator complex.</title>
        <authorList>
            <person name="Bourbon H.-M."/>
        </authorList>
    </citation>
    <scope>NOMENCLATURE</scope>
</reference>
<feature type="chain" id="PRO_0000388660" description="Putative mediator of RNA polymerase II transcription subunit 23">
    <location>
        <begin position="1"/>
        <end position="1662"/>
    </location>
</feature>
<feature type="region of interest" description="Disordered" evidence="3">
    <location>
        <begin position="1"/>
        <end position="24"/>
    </location>
</feature>
<feature type="region of interest" description="Disordered" evidence="3">
    <location>
        <begin position="95"/>
        <end position="139"/>
    </location>
</feature>
<feature type="region of interest" description="Disordered" evidence="3">
    <location>
        <begin position="206"/>
        <end position="252"/>
    </location>
</feature>
<feature type="region of interest" description="Disordered" evidence="3">
    <location>
        <begin position="1530"/>
        <end position="1572"/>
    </location>
</feature>
<feature type="coiled-coil region" evidence="2">
    <location>
        <begin position="39"/>
        <end position="122"/>
    </location>
</feature>
<feature type="compositionally biased region" description="Low complexity" evidence="3">
    <location>
        <begin position="95"/>
        <end position="124"/>
    </location>
</feature>
<feature type="compositionally biased region" description="Acidic residues" evidence="3">
    <location>
        <begin position="1532"/>
        <end position="1560"/>
    </location>
</feature>
<sequence>MYTNIPQQQQNIPQQQQQNIPQQQNVQNIQQPLPHTNIQQQNIQQQQQQYQLQFQKQQQQQQQQQQQQQQQQQQQQQQQQQQQQQQQQQQQQLQQQRPQTPQQNAQQQSQQSQQSQQQQASLGQGQQGSGPNTPPQSQPETIESIFKQLDLNSTGQQAKDILEQCKLKIHSLESQQLIAQAKYKLFSLAANYQSTVFQHIKMVSTTTTPTSTPTTSTTNTPQNSNTSSSSSTGTSSSTIGSSSSSTTTSTTNNENLGLPISKEIYQQKIQLWISIITFLRENLQYFGKWRESIYISIQNITQSTLLPTLIQKEFFTELFILLKSIFSFVNIEFPHYIALKEVKLSNTHQCLEYQNLIEPYYCRAAKLSSLLSLSSLSSSARIVGSSILLNQDAMIGYTNQLTESPPFFTSNRLLNNKYSTIVHHLLSQSASIEPIKELLFPQVQSNTLKSKIISIITEATISKTMQLLNKYPNQIIENQIENNSWKEWLLFSEQFYFLCENGLVDLEQFIVTLSEKRMNNGDPIKDNMVVLLISKTIIIQDVKTLFKQHLQNVNSNHYGHLIPLVLSFVNNDSNYPIISQNISLYFFLMRINTNTENPEIIAHIKKLLDNFNFQFTLFQQYRNWWESEKVKQKPEFFTTIQDITYFSIICNVIPTEGEMELIRFQSNGSDQSIQFPGVGGIGTVVTGKIKPVSNLILLNLSLRCRRKLIQESVLLLLDKEVPISPGFLEDYCRTVHYTPGPVSPFLFSYFKKFHRLAPIHAVIESVSHRLLKVLKSNKELAVLLRALQDIQTQKPIQNIQLSRSIDYLLLKASISLPVDLISAKEIWKSLDLGLFNNRRLITSIARLIKLKGIQDFNRISDVPVFIENCFKSNPYCFSKSTLEFFPDILKNEFKKNSENLSLNPNQFTNLTLMKPPTLQKVQLENQQRFQLFSVGGKLQILQKQALVQQYLTDNNSNLLLCQVFIYMLENKIKMDVMGPLIQQMFFKQIIGNQQPQQQQQPQQPPPLAISNQQLNRITSVFIDFIFDEVYVNHPLKQENLHQHVSEFLCQSIFTYKILTLNSVLLALLDRDDHPSMPTILDTFLFSSAEIQNRLQFFSTYPSDFFISQSFRNDDNYFIKNCEFNNRFNDLIPTVIDPNTLIEQSTQDTILPIYYSNSISRLMPIVEIIISKSIELNNGDLFEKTINHFNIPYHYYQDEKETTIKDTLIYYYDSQLFKLNPELKLLFLKLLNQSDIDNRFSNIFNQFLKSSRIEDITMVGSTAYFNDLISPLAEMMDLTNQNVFDTFSFKTENTFSSIDISNPLELKLNNIILEILLLPLDSNWIANGLVSLLNYSNRNKNFSDRKIDPPSSSMVLALSIIFSILPTQIHNSFIPIVTQNLSNELNFSKFKSPIMKNQYNFGNYTTNVEEKMTEPIEWYIYFIQFYYLYCPLERLLSLNDLVTNIRPLIKNVYQYYVLLTIVSPVLLRFGTQTNHLIQITREMLQILTDSYLSSYIENTLQDLESCWIGNTNDDDDIMDTTNFNLFGKRIGYDDDDDDEDDDYYDEDDEDEDDDNEDDQQDENDRMDFSQDTNNIFNRSMGDHDHLMMMSNSENLNDPWSDKNEFFRKQKSIFLKIDSQLIDTIIDWIYHIKMIFPFQPFRDELLRIVKEFKPNFLSKFNQLN</sequence>
<dbReference type="EMBL" id="AAFI02000005">
    <property type="protein sequence ID" value="EAL72567.1"/>
    <property type="molecule type" value="Genomic_DNA"/>
</dbReference>
<dbReference type="RefSeq" id="XP_646801.1">
    <property type="nucleotide sequence ID" value="XM_641709.1"/>
</dbReference>
<dbReference type="FunCoup" id="Q55BN0">
    <property type="interactions" value="149"/>
</dbReference>
<dbReference type="STRING" id="44689.Q55BN0"/>
<dbReference type="PaxDb" id="44689-DDB0266935"/>
<dbReference type="EnsemblProtists" id="EAL72567">
    <property type="protein sequence ID" value="EAL72567"/>
    <property type="gene ID" value="DDB_G0270434"/>
</dbReference>
<dbReference type="GeneID" id="8617774"/>
<dbReference type="KEGG" id="ddi:DDB_G0270434"/>
<dbReference type="dictyBase" id="DDB_G0270434">
    <property type="gene designation" value="med23"/>
</dbReference>
<dbReference type="VEuPathDB" id="AmoebaDB:DDB_G0270434"/>
<dbReference type="eggNOG" id="KOG1883">
    <property type="taxonomic scope" value="Eukaryota"/>
</dbReference>
<dbReference type="HOGENOM" id="CLU_242121_0_0_1"/>
<dbReference type="InParanoid" id="Q55BN0"/>
<dbReference type="OMA" id="WYIYFIQ"/>
<dbReference type="PRO" id="PR:Q55BN0"/>
<dbReference type="Proteomes" id="UP000002195">
    <property type="component" value="Chromosome 1"/>
</dbReference>
<dbReference type="GO" id="GO:0016592">
    <property type="term" value="C:mediator complex"/>
    <property type="evidence" value="ECO:0000318"/>
    <property type="project" value="GO_Central"/>
</dbReference>
<dbReference type="GO" id="GO:0005667">
    <property type="term" value="C:transcription regulator complex"/>
    <property type="evidence" value="ECO:0000318"/>
    <property type="project" value="GO_Central"/>
</dbReference>
<dbReference type="GO" id="GO:0010628">
    <property type="term" value="P:positive regulation of gene expression"/>
    <property type="evidence" value="ECO:0000318"/>
    <property type="project" value="GO_Central"/>
</dbReference>
<dbReference type="GO" id="GO:0006357">
    <property type="term" value="P:regulation of transcription by RNA polymerase II"/>
    <property type="evidence" value="ECO:0000318"/>
    <property type="project" value="GO_Central"/>
</dbReference>
<dbReference type="GO" id="GO:0030587">
    <property type="term" value="P:sorocarp development"/>
    <property type="evidence" value="ECO:0007001"/>
    <property type="project" value="dictyBase"/>
</dbReference>
<dbReference type="InterPro" id="IPR021629">
    <property type="entry name" value="Mediator_Med23"/>
</dbReference>
<dbReference type="PANTHER" id="PTHR12691">
    <property type="entry name" value="MEDIATOR OF RNA POLYMERASE II TRANSCRIPTION SUBUNIT 23"/>
    <property type="match status" value="1"/>
</dbReference>
<dbReference type="PANTHER" id="PTHR12691:SF10">
    <property type="entry name" value="MEDIATOR OF RNA POLYMERASE II TRANSCRIPTION SUBUNIT 23"/>
    <property type="match status" value="1"/>
</dbReference>
<dbReference type="Pfam" id="PF11573">
    <property type="entry name" value="Med23"/>
    <property type="match status" value="1"/>
</dbReference>